<accession>Q8T6J2</accession>
<accession>Q555N5</accession>
<accession>Q8T162</accession>
<evidence type="ECO:0000255" key="1"/>
<evidence type="ECO:0000255" key="2">
    <source>
        <dbReference type="PROSITE-ProRule" id="PRU00434"/>
    </source>
</evidence>
<evidence type="ECO:0000305" key="3"/>
<proteinExistence type="inferred from homology"/>
<sequence>MGEKSSQLKTLLKKNLLLKSKSKCGICCEIVFPIIIVLLVFAILVLVQLFKPNYDLIKTTQFSNRINENNIIIYGGKAGSLNVEQKGVIDMMKFQLSNELNKSISEVDVYFKEINDKSEMENYFQINSTQVFGGIWFESNQLSSVANTTNTNTTTNSFKYSIRLDSNSVLDSNKVKDNGIDSSDYLTKNWAYIQIAMDQAIFGYFGLDYKLVINGQRYPDPYVELWQKWINGRESVFKSAGSVFVSAALLIFTFRLVTELVVEKETKIREGMSIMGLNQYCYFISWIITSLVTALPIDLIIIVILKGSQVIHSTSWIIVIVTLILYLLTLQLLAFIFSMFFDKSKFAGLLTFLTILLINICGIFIGEYEIINIHIKLLLCCIFSPIGIACSFYIMSIRDIPDTISTINLNQVISEKQIIGTFVFNIIFYTFLIWYLDKIVKTEYGTKEPWYFLFTKRYWTVGAGKINKKNKNKEYNYNDIESTIQNNNNDNIEMVPIEVRNKTTISIRNLRKEFKTGDGLRIAVNDLNLDMFDGQIHGLLGPNGSGKSTTISMLTGLLSPTSGTAFILGNDITYQMNEIRKCTGVCLQTDIIWNQLTVLEHLEIYASLKGITNKKQIKSESLKMANEIDLGEKLHTPAGSLSGGQKRKLCLGIAFIGRSTIIFLDEVSSGMDPSSRRKVWDFLLSHKKGKTIILTTHYLDEADYLSDRISIISHGKLITDGSSLFLKNKYGVGYLLTCSKSLNTIDQFNVDQVTQFIRDQIPDVTVLSNAGSEISFRLPTASLPVFSKFFKDFDENLSNFHIDSYGISVTTLEEVFLKIGTDIDTDALSIADGNGNDDELKRSIGVSSTGIKSKQQLKALLIKRVKTSSKDFKAFLLSLLLPLLVIIGSIIVFKEVDNEVIFYNNSTEPLTFSLLQQYGKNDIVPIQLAGTTSEFDFNKFLSNSPYFNQFQYLNNSINFNQYLINNYKQSSGSINFTIPLSSSLINNTTKVISYNSLFNFNYIHSWPVHVNLINDALLRNHNGIGIECTSLPFDHILTSFQKASQGMNIQSIVYFIVIMMAGFSLMAGSFAGSISQERTNRIKRLLYISGCKKYIYWVSNLLWDYFFAFILLLITCIILAIVDDKFNDQFGLFFLSLVLFSLSIIPLSYLFSFKFSSFGKSTGAITAIHFSIGVIMTIAMIILRIEVIIKNSSSLENIADIIDIVFNILSPLYAFSRVIFIISGFPGSLRLGALKIDDYWSLHYASTPIIILSVHVVVWTIFILLIDYSPEFKGYLRNPKTILPPPPPIDEDSDVSAERIRLESMSPIPSTDQGSGGGGDMLQYKGLHKLFIGKGKNPNKNAVYNSTLGIPQGQTFGLLGLNGAGKTTTVSMLAGDILPTSGQITINGHDLVTDRAQALRGVSVCPQFDALITLLTAREQLSLYCAIKGVPDDKISLVVEAFIKMMDLGKIANSNTGGYSGGNKRKVSLSIAMLGNPSVVLIDEASSGCDPIIRYRQCQVISELGKNKVIILTSHSMSEIQALCSRMTIMRDGQFKCLGSTQHIKSKFGAGYSVEVKFKKSCLEVGIPQSLQCVLECFPNATILDQHDLMASLELPNPPENPIKVSEIFNILSTELSSILDDYSVSQTSLEQVFLKLTGATHEDRLNLNNQQQQQQTIPNSD</sequence>
<feature type="chain" id="PRO_0000363837" description="ABC transporter A family member 5">
    <location>
        <begin position="1"/>
        <end position="1662"/>
    </location>
</feature>
<feature type="transmembrane region" description="Helical" evidence="1">
    <location>
        <begin position="30"/>
        <end position="50"/>
    </location>
</feature>
<feature type="transmembrane region" description="Helical" evidence="1">
    <location>
        <begin position="242"/>
        <end position="262"/>
    </location>
</feature>
<feature type="transmembrane region" description="Helical" evidence="1">
    <location>
        <begin position="284"/>
        <end position="304"/>
    </location>
</feature>
<feature type="transmembrane region" description="Helical" evidence="1">
    <location>
        <begin position="317"/>
        <end position="337"/>
    </location>
</feature>
<feature type="transmembrane region" description="Helical" evidence="1">
    <location>
        <begin position="346"/>
        <end position="366"/>
    </location>
</feature>
<feature type="transmembrane region" description="Helical" evidence="1">
    <location>
        <begin position="377"/>
        <end position="397"/>
    </location>
</feature>
<feature type="transmembrane region" description="Helical" evidence="1">
    <location>
        <begin position="417"/>
        <end position="437"/>
    </location>
</feature>
<feature type="transmembrane region" description="Helical" evidence="1">
    <location>
        <begin position="872"/>
        <end position="892"/>
    </location>
</feature>
<feature type="transmembrane region" description="Helical" evidence="1">
    <location>
        <begin position="1052"/>
        <end position="1072"/>
    </location>
</feature>
<feature type="transmembrane region" description="Helical" evidence="1">
    <location>
        <begin position="1102"/>
        <end position="1122"/>
    </location>
</feature>
<feature type="transmembrane region" description="Helical" evidence="1">
    <location>
        <begin position="1130"/>
        <end position="1150"/>
    </location>
</feature>
<feature type="transmembrane region" description="Helical" evidence="1">
    <location>
        <begin position="1163"/>
        <end position="1183"/>
    </location>
</feature>
<feature type="transmembrane region" description="Helical" evidence="1">
    <location>
        <begin position="1201"/>
        <end position="1221"/>
    </location>
</feature>
<feature type="transmembrane region" description="Helical" evidence="1">
    <location>
        <begin position="1246"/>
        <end position="1266"/>
    </location>
</feature>
<feature type="domain" description="ABC transporter 1" evidence="2">
    <location>
        <begin position="505"/>
        <end position="739"/>
    </location>
</feature>
<feature type="domain" description="ABC transporter 2" evidence="2">
    <location>
        <begin position="1322"/>
        <end position="1557"/>
    </location>
</feature>
<feature type="binding site" evidence="2">
    <location>
        <begin position="541"/>
        <end position="548"/>
    </location>
    <ligand>
        <name>ATP</name>
        <dbReference type="ChEBI" id="CHEBI:30616"/>
        <label>1</label>
    </ligand>
</feature>
<feature type="binding site" evidence="2">
    <location>
        <begin position="1360"/>
        <end position="1367"/>
    </location>
    <ligand>
        <name>ATP</name>
        <dbReference type="ChEBI" id="CHEBI:30616"/>
        <label>2</label>
    </ligand>
</feature>
<keyword id="KW-0067">ATP-binding</keyword>
<keyword id="KW-0472">Membrane</keyword>
<keyword id="KW-0547">Nucleotide-binding</keyword>
<keyword id="KW-1185">Reference proteome</keyword>
<keyword id="KW-0677">Repeat</keyword>
<keyword id="KW-0812">Transmembrane</keyword>
<keyword id="KW-1133">Transmembrane helix</keyword>
<keyword id="KW-0813">Transport</keyword>
<organism>
    <name type="scientific">Dictyostelium discoideum</name>
    <name type="common">Social amoeba</name>
    <dbReference type="NCBI Taxonomy" id="44689"/>
    <lineage>
        <taxon>Eukaryota</taxon>
        <taxon>Amoebozoa</taxon>
        <taxon>Evosea</taxon>
        <taxon>Eumycetozoa</taxon>
        <taxon>Dictyostelia</taxon>
        <taxon>Dictyosteliales</taxon>
        <taxon>Dictyosteliaceae</taxon>
        <taxon>Dictyostelium</taxon>
    </lineage>
</organism>
<comment type="subcellular location">
    <subcellularLocation>
        <location evidence="3">Membrane</location>
        <topology evidence="3">Multi-pass membrane protein</topology>
    </subcellularLocation>
</comment>
<comment type="similarity">
    <text evidence="3">Belongs to the ABC transporter superfamily. ABCA family.</text>
</comment>
<reference key="1">
    <citation type="journal article" date="2002" name="Eukaryot. Cell">
        <title>Evolutionary analyses of ABC transporters of Dictyostelium discoideum.</title>
        <authorList>
            <person name="Anjard C."/>
            <person name="Loomis W.F."/>
        </authorList>
    </citation>
    <scope>NUCLEOTIDE SEQUENCE [GENOMIC DNA]</scope>
    <scope>NOMENCLATURE</scope>
    <source>
        <strain>AX4</strain>
    </source>
</reference>
<reference key="2">
    <citation type="journal article" date="2002" name="Nature">
        <title>Sequence and analysis of chromosome 2 of Dictyostelium discoideum.</title>
        <authorList>
            <person name="Gloeckner G."/>
            <person name="Eichinger L."/>
            <person name="Szafranski K."/>
            <person name="Pachebat J.A."/>
            <person name="Bankier A.T."/>
            <person name="Dear P.H."/>
            <person name="Lehmann R."/>
            <person name="Baumgart C."/>
            <person name="Parra G."/>
            <person name="Abril J.F."/>
            <person name="Guigo R."/>
            <person name="Kumpf K."/>
            <person name="Tunggal B."/>
            <person name="Cox E.C."/>
            <person name="Quail M.A."/>
            <person name="Platzer M."/>
            <person name="Rosenthal A."/>
            <person name="Noegel A.A."/>
        </authorList>
    </citation>
    <scope>NUCLEOTIDE SEQUENCE [LARGE SCALE GENOMIC DNA]</scope>
    <source>
        <strain>AX4</strain>
    </source>
</reference>
<reference key="3">
    <citation type="journal article" date="2005" name="Nature">
        <title>The genome of the social amoeba Dictyostelium discoideum.</title>
        <authorList>
            <person name="Eichinger L."/>
            <person name="Pachebat J.A."/>
            <person name="Gloeckner G."/>
            <person name="Rajandream M.A."/>
            <person name="Sucgang R."/>
            <person name="Berriman M."/>
            <person name="Song J."/>
            <person name="Olsen R."/>
            <person name="Szafranski K."/>
            <person name="Xu Q."/>
            <person name="Tunggal B."/>
            <person name="Kummerfeld S."/>
            <person name="Madera M."/>
            <person name="Konfortov B.A."/>
            <person name="Rivero F."/>
            <person name="Bankier A.T."/>
            <person name="Lehmann R."/>
            <person name="Hamlin N."/>
            <person name="Davies R."/>
            <person name="Gaudet P."/>
            <person name="Fey P."/>
            <person name="Pilcher K."/>
            <person name="Chen G."/>
            <person name="Saunders D."/>
            <person name="Sodergren E.J."/>
            <person name="Davis P."/>
            <person name="Kerhornou A."/>
            <person name="Nie X."/>
            <person name="Hall N."/>
            <person name="Anjard C."/>
            <person name="Hemphill L."/>
            <person name="Bason N."/>
            <person name="Farbrother P."/>
            <person name="Desany B."/>
            <person name="Just E."/>
            <person name="Morio T."/>
            <person name="Rost R."/>
            <person name="Churcher C.M."/>
            <person name="Cooper J."/>
            <person name="Haydock S."/>
            <person name="van Driessche N."/>
            <person name="Cronin A."/>
            <person name="Goodhead I."/>
            <person name="Muzny D.M."/>
            <person name="Mourier T."/>
            <person name="Pain A."/>
            <person name="Lu M."/>
            <person name="Harper D."/>
            <person name="Lindsay R."/>
            <person name="Hauser H."/>
            <person name="James K.D."/>
            <person name="Quiles M."/>
            <person name="Madan Babu M."/>
            <person name="Saito T."/>
            <person name="Buchrieser C."/>
            <person name="Wardroper A."/>
            <person name="Felder M."/>
            <person name="Thangavelu M."/>
            <person name="Johnson D."/>
            <person name="Knights A."/>
            <person name="Loulseged H."/>
            <person name="Mungall K.L."/>
            <person name="Oliver K."/>
            <person name="Price C."/>
            <person name="Quail M.A."/>
            <person name="Urushihara H."/>
            <person name="Hernandez J."/>
            <person name="Rabbinowitsch E."/>
            <person name="Steffen D."/>
            <person name="Sanders M."/>
            <person name="Ma J."/>
            <person name="Kohara Y."/>
            <person name="Sharp S."/>
            <person name="Simmonds M.N."/>
            <person name="Spiegler S."/>
            <person name="Tivey A."/>
            <person name="Sugano S."/>
            <person name="White B."/>
            <person name="Walker D."/>
            <person name="Woodward J.R."/>
            <person name="Winckler T."/>
            <person name="Tanaka Y."/>
            <person name="Shaulsky G."/>
            <person name="Schleicher M."/>
            <person name="Weinstock G.M."/>
            <person name="Rosenthal A."/>
            <person name="Cox E.C."/>
            <person name="Chisholm R.L."/>
            <person name="Gibbs R.A."/>
            <person name="Loomis W.F."/>
            <person name="Platzer M."/>
            <person name="Kay R.R."/>
            <person name="Williams J.G."/>
            <person name="Dear P.H."/>
            <person name="Noegel A.A."/>
            <person name="Barrell B.G."/>
            <person name="Kuspa A."/>
        </authorList>
    </citation>
    <scope>NUCLEOTIDE SEQUENCE [LARGE SCALE GENOMIC DNA]</scope>
    <source>
        <strain>AX4</strain>
    </source>
</reference>
<protein>
    <recommendedName>
        <fullName>ABC transporter A family member 5</fullName>
    </recommendedName>
    <alternativeName>
        <fullName>ABC transporter ABCA.5</fullName>
    </alternativeName>
</protein>
<dbReference type="EMBL" id="AF465307">
    <property type="protein sequence ID" value="AAL85298.1"/>
    <property type="molecule type" value="Genomic_DNA"/>
</dbReference>
<dbReference type="EMBL" id="AC123513">
    <property type="protein sequence ID" value="AAM44362.1"/>
    <property type="molecule type" value="Genomic_DNA"/>
</dbReference>
<dbReference type="EMBL" id="AAFI02000012">
    <property type="protein sequence ID" value="EAL69952.1"/>
    <property type="molecule type" value="Genomic_DNA"/>
</dbReference>
<dbReference type="RefSeq" id="XP_644031.1">
    <property type="nucleotide sequence ID" value="XM_638939.1"/>
</dbReference>
<dbReference type="SMR" id="Q8T6J2"/>
<dbReference type="FunCoup" id="Q8T6J2">
    <property type="interactions" value="149"/>
</dbReference>
<dbReference type="STRING" id="44689.Q8T6J2"/>
<dbReference type="PaxDb" id="44689-DDB0191224"/>
<dbReference type="EnsemblProtists" id="EAL69952">
    <property type="protein sequence ID" value="EAL69952"/>
    <property type="gene ID" value="DDB_G0274119"/>
</dbReference>
<dbReference type="GeneID" id="8619461"/>
<dbReference type="KEGG" id="ddi:DDB_G0274119"/>
<dbReference type="dictyBase" id="DDB_G0274119">
    <property type="gene designation" value="abcA5"/>
</dbReference>
<dbReference type="VEuPathDB" id="AmoebaDB:DDB_G0274119"/>
<dbReference type="eggNOG" id="KOG0059">
    <property type="taxonomic scope" value="Eukaryota"/>
</dbReference>
<dbReference type="HOGENOM" id="CLU_000604_19_1_1"/>
<dbReference type="InParanoid" id="Q8T6J2"/>
<dbReference type="OMA" id="WKNWIVL"/>
<dbReference type="PhylomeDB" id="Q8T6J2"/>
<dbReference type="Reactome" id="R-DDI-1369062">
    <property type="pathway name" value="ABC transporters in lipid homeostasis"/>
</dbReference>
<dbReference type="Reactome" id="R-DDI-2453902">
    <property type="pathway name" value="The canonical retinoid cycle in rods (twilight vision)"/>
</dbReference>
<dbReference type="Reactome" id="R-DDI-382556">
    <property type="pathway name" value="ABC-family proteins mediated transport"/>
</dbReference>
<dbReference type="Reactome" id="R-DDI-5683826">
    <property type="pathway name" value="Surfactant metabolism"/>
</dbReference>
<dbReference type="Reactome" id="R-DDI-6798695">
    <property type="pathway name" value="Neutrophil degranulation"/>
</dbReference>
<dbReference type="Reactome" id="R-DDI-8963896">
    <property type="pathway name" value="HDL assembly"/>
</dbReference>
<dbReference type="PRO" id="PR:Q8T6J2"/>
<dbReference type="Proteomes" id="UP000002195">
    <property type="component" value="Chromosome 2"/>
</dbReference>
<dbReference type="GO" id="GO:0043231">
    <property type="term" value="C:intracellular membrane-bounded organelle"/>
    <property type="evidence" value="ECO:0000318"/>
    <property type="project" value="GO_Central"/>
</dbReference>
<dbReference type="GO" id="GO:0016020">
    <property type="term" value="C:membrane"/>
    <property type="evidence" value="ECO:0007669"/>
    <property type="project" value="UniProtKB-SubCell"/>
</dbReference>
<dbReference type="GO" id="GO:0140359">
    <property type="term" value="F:ABC-type transporter activity"/>
    <property type="evidence" value="ECO:0007669"/>
    <property type="project" value="InterPro"/>
</dbReference>
<dbReference type="GO" id="GO:0005524">
    <property type="term" value="F:ATP binding"/>
    <property type="evidence" value="ECO:0007669"/>
    <property type="project" value="UniProtKB-KW"/>
</dbReference>
<dbReference type="GO" id="GO:0016887">
    <property type="term" value="F:ATP hydrolysis activity"/>
    <property type="evidence" value="ECO:0007669"/>
    <property type="project" value="InterPro"/>
</dbReference>
<dbReference type="GO" id="GO:0042626">
    <property type="term" value="F:ATPase-coupled transmembrane transporter activity"/>
    <property type="evidence" value="ECO:0000318"/>
    <property type="project" value="GO_Central"/>
</dbReference>
<dbReference type="GO" id="GO:0005319">
    <property type="term" value="F:lipid transporter activity"/>
    <property type="evidence" value="ECO:0000318"/>
    <property type="project" value="GO_Central"/>
</dbReference>
<dbReference type="GO" id="GO:0006869">
    <property type="term" value="P:lipid transport"/>
    <property type="evidence" value="ECO:0000318"/>
    <property type="project" value="GO_Central"/>
</dbReference>
<dbReference type="GO" id="GO:0030587">
    <property type="term" value="P:sorocarp development"/>
    <property type="evidence" value="ECO:0007001"/>
    <property type="project" value="dictyBase"/>
</dbReference>
<dbReference type="GO" id="GO:0031288">
    <property type="term" value="P:sorocarp morphogenesis"/>
    <property type="evidence" value="ECO:0000315"/>
    <property type="project" value="dictyBase"/>
</dbReference>
<dbReference type="CDD" id="cd03263">
    <property type="entry name" value="ABC_subfamily_A"/>
    <property type="match status" value="2"/>
</dbReference>
<dbReference type="FunFam" id="3.40.50.300:FF:002530">
    <property type="entry name" value="ABC transporter A family member 5"/>
    <property type="match status" value="1"/>
</dbReference>
<dbReference type="FunFam" id="3.40.50.300:FF:000298">
    <property type="entry name" value="ATP-binding cassette sub-family A member 12"/>
    <property type="match status" value="1"/>
</dbReference>
<dbReference type="Gene3D" id="3.40.50.300">
    <property type="entry name" value="P-loop containing nucleotide triphosphate hydrolases"/>
    <property type="match status" value="2"/>
</dbReference>
<dbReference type="InterPro" id="IPR003593">
    <property type="entry name" value="AAA+_ATPase"/>
</dbReference>
<dbReference type="InterPro" id="IPR013525">
    <property type="entry name" value="ABC2_TM"/>
</dbReference>
<dbReference type="InterPro" id="IPR003439">
    <property type="entry name" value="ABC_transporter-like_ATP-bd"/>
</dbReference>
<dbReference type="InterPro" id="IPR017871">
    <property type="entry name" value="ABC_transporter-like_CS"/>
</dbReference>
<dbReference type="InterPro" id="IPR026082">
    <property type="entry name" value="ABCA"/>
</dbReference>
<dbReference type="InterPro" id="IPR027417">
    <property type="entry name" value="P-loop_NTPase"/>
</dbReference>
<dbReference type="InterPro" id="IPR056264">
    <property type="entry name" value="R2_ABCA1-4-like"/>
</dbReference>
<dbReference type="PANTHER" id="PTHR19229:SF36">
    <property type="entry name" value="ATP-BINDING CASSETTE SUB-FAMILY A MEMBER 2"/>
    <property type="match status" value="1"/>
</dbReference>
<dbReference type="PANTHER" id="PTHR19229">
    <property type="entry name" value="ATP-BINDING CASSETTE TRANSPORTER SUBFAMILY A ABCA"/>
    <property type="match status" value="1"/>
</dbReference>
<dbReference type="Pfam" id="PF12698">
    <property type="entry name" value="ABC2_membrane_3"/>
    <property type="match status" value="2"/>
</dbReference>
<dbReference type="Pfam" id="PF00005">
    <property type="entry name" value="ABC_tran"/>
    <property type="match status" value="2"/>
</dbReference>
<dbReference type="Pfam" id="PF23321">
    <property type="entry name" value="R1_ABCA1"/>
    <property type="match status" value="1"/>
</dbReference>
<dbReference type="SMART" id="SM00382">
    <property type="entry name" value="AAA"/>
    <property type="match status" value="2"/>
</dbReference>
<dbReference type="SUPFAM" id="SSF52540">
    <property type="entry name" value="P-loop containing nucleoside triphosphate hydrolases"/>
    <property type="match status" value="2"/>
</dbReference>
<dbReference type="PROSITE" id="PS00211">
    <property type="entry name" value="ABC_TRANSPORTER_1"/>
    <property type="match status" value="2"/>
</dbReference>
<dbReference type="PROSITE" id="PS50893">
    <property type="entry name" value="ABC_TRANSPORTER_2"/>
    <property type="match status" value="2"/>
</dbReference>
<gene>
    <name type="primary">abcA5</name>
    <name type="ORF">DDB_G0274119</name>
</gene>
<name>ABCA5_DICDI</name>